<name>CH60_LACAC</name>
<gene>
    <name evidence="1" type="primary">groEL</name>
    <name evidence="1" type="synonym">groL</name>
    <name type="ordered locus">LBA0406</name>
</gene>
<accession>Q93G07</accession>
<accession>Q5FLX7</accession>
<organism>
    <name type="scientific">Lactobacillus acidophilus (strain ATCC 700396 / NCK56 / N2 / NCFM)</name>
    <dbReference type="NCBI Taxonomy" id="272621"/>
    <lineage>
        <taxon>Bacteria</taxon>
        <taxon>Bacillati</taxon>
        <taxon>Bacillota</taxon>
        <taxon>Bacilli</taxon>
        <taxon>Lactobacillales</taxon>
        <taxon>Lactobacillaceae</taxon>
        <taxon>Lactobacillus</taxon>
    </lineage>
</organism>
<dbReference type="EC" id="5.6.1.7" evidence="1"/>
<dbReference type="EMBL" id="AF300645">
    <property type="protein sequence ID" value="AAK97218.1"/>
    <property type="molecule type" value="Genomic_DNA"/>
</dbReference>
<dbReference type="EMBL" id="CP000033">
    <property type="protein sequence ID" value="AAV42297.1"/>
    <property type="molecule type" value="Genomic_DNA"/>
</dbReference>
<dbReference type="RefSeq" id="WP_003549158.1">
    <property type="nucleotide sequence ID" value="NC_006814.3"/>
</dbReference>
<dbReference type="RefSeq" id="YP_193328.1">
    <property type="nucleotide sequence ID" value="NC_006814.3"/>
</dbReference>
<dbReference type="SMR" id="Q93G07"/>
<dbReference type="STRING" id="272621.LBA0406"/>
<dbReference type="GeneID" id="93290494"/>
<dbReference type="KEGG" id="lac:LBA0406"/>
<dbReference type="PATRIC" id="fig|272621.13.peg.392"/>
<dbReference type="eggNOG" id="COG0459">
    <property type="taxonomic scope" value="Bacteria"/>
</dbReference>
<dbReference type="HOGENOM" id="CLU_016503_3_0_9"/>
<dbReference type="OrthoDB" id="9766614at2"/>
<dbReference type="BioCyc" id="LACI272621:G1G49-400-MONOMER"/>
<dbReference type="Proteomes" id="UP000006381">
    <property type="component" value="Chromosome"/>
</dbReference>
<dbReference type="GO" id="GO:0005737">
    <property type="term" value="C:cytoplasm"/>
    <property type="evidence" value="ECO:0007669"/>
    <property type="project" value="UniProtKB-SubCell"/>
</dbReference>
<dbReference type="GO" id="GO:0005524">
    <property type="term" value="F:ATP binding"/>
    <property type="evidence" value="ECO:0007669"/>
    <property type="project" value="UniProtKB-UniRule"/>
</dbReference>
<dbReference type="GO" id="GO:0140662">
    <property type="term" value="F:ATP-dependent protein folding chaperone"/>
    <property type="evidence" value="ECO:0007669"/>
    <property type="project" value="InterPro"/>
</dbReference>
<dbReference type="GO" id="GO:0016853">
    <property type="term" value="F:isomerase activity"/>
    <property type="evidence" value="ECO:0007669"/>
    <property type="project" value="UniProtKB-KW"/>
</dbReference>
<dbReference type="GO" id="GO:0051082">
    <property type="term" value="F:unfolded protein binding"/>
    <property type="evidence" value="ECO:0007669"/>
    <property type="project" value="UniProtKB-UniRule"/>
</dbReference>
<dbReference type="GO" id="GO:0042026">
    <property type="term" value="P:protein refolding"/>
    <property type="evidence" value="ECO:0007669"/>
    <property type="project" value="UniProtKB-UniRule"/>
</dbReference>
<dbReference type="CDD" id="cd03344">
    <property type="entry name" value="GroEL"/>
    <property type="match status" value="1"/>
</dbReference>
<dbReference type="FunFam" id="3.50.7.10:FF:000001">
    <property type="entry name" value="60 kDa chaperonin"/>
    <property type="match status" value="1"/>
</dbReference>
<dbReference type="Gene3D" id="3.50.7.10">
    <property type="entry name" value="GroEL"/>
    <property type="match status" value="1"/>
</dbReference>
<dbReference type="Gene3D" id="1.10.560.10">
    <property type="entry name" value="GroEL-like equatorial domain"/>
    <property type="match status" value="1"/>
</dbReference>
<dbReference type="Gene3D" id="3.30.260.10">
    <property type="entry name" value="TCP-1-like chaperonin intermediate domain"/>
    <property type="match status" value="1"/>
</dbReference>
<dbReference type="HAMAP" id="MF_00600">
    <property type="entry name" value="CH60"/>
    <property type="match status" value="1"/>
</dbReference>
<dbReference type="InterPro" id="IPR018370">
    <property type="entry name" value="Chaperonin_Cpn60_CS"/>
</dbReference>
<dbReference type="InterPro" id="IPR001844">
    <property type="entry name" value="Cpn60/GroEL"/>
</dbReference>
<dbReference type="InterPro" id="IPR002423">
    <property type="entry name" value="Cpn60/GroEL/TCP-1"/>
</dbReference>
<dbReference type="InterPro" id="IPR027409">
    <property type="entry name" value="GroEL-like_apical_dom_sf"/>
</dbReference>
<dbReference type="InterPro" id="IPR027413">
    <property type="entry name" value="GROEL-like_equatorial_sf"/>
</dbReference>
<dbReference type="InterPro" id="IPR027410">
    <property type="entry name" value="TCP-1-like_intermed_sf"/>
</dbReference>
<dbReference type="NCBIfam" id="TIGR02348">
    <property type="entry name" value="GroEL"/>
    <property type="match status" value="1"/>
</dbReference>
<dbReference type="NCBIfam" id="NF000592">
    <property type="entry name" value="PRK00013.1"/>
    <property type="match status" value="1"/>
</dbReference>
<dbReference type="NCBIfam" id="NF009487">
    <property type="entry name" value="PRK12849.1"/>
    <property type="match status" value="1"/>
</dbReference>
<dbReference type="NCBIfam" id="NF009488">
    <property type="entry name" value="PRK12850.1"/>
    <property type="match status" value="1"/>
</dbReference>
<dbReference type="NCBIfam" id="NF009489">
    <property type="entry name" value="PRK12851.1"/>
    <property type="match status" value="1"/>
</dbReference>
<dbReference type="PANTHER" id="PTHR45633">
    <property type="entry name" value="60 KDA HEAT SHOCK PROTEIN, MITOCHONDRIAL"/>
    <property type="match status" value="1"/>
</dbReference>
<dbReference type="Pfam" id="PF00118">
    <property type="entry name" value="Cpn60_TCP1"/>
    <property type="match status" value="1"/>
</dbReference>
<dbReference type="PRINTS" id="PR00298">
    <property type="entry name" value="CHAPERONIN60"/>
</dbReference>
<dbReference type="SUPFAM" id="SSF52029">
    <property type="entry name" value="GroEL apical domain-like"/>
    <property type="match status" value="1"/>
</dbReference>
<dbReference type="SUPFAM" id="SSF48592">
    <property type="entry name" value="GroEL equatorial domain-like"/>
    <property type="match status" value="1"/>
</dbReference>
<dbReference type="SUPFAM" id="SSF54849">
    <property type="entry name" value="GroEL-intermediate domain like"/>
    <property type="match status" value="1"/>
</dbReference>
<dbReference type="PROSITE" id="PS00296">
    <property type="entry name" value="CHAPERONINS_CPN60"/>
    <property type="match status" value="1"/>
</dbReference>
<sequence>MAKDIKFAENARRSLLKGVDKLADTVKTTIGPKGRNVVLEQSYGNPDITNDGVTIAKSIELKDHYENMGAKLVAEAAQKTNDIAGDGTTTATVLTQAIAREGMKNVTAGANPVGIRRGIEKATKAAVDELHKISHKVESKEQIANVAAVSSASKEVGELIADAMEKVGHDGVITIEDSRGINTELSVVEGMQFDRGYLSQYMVTDNDKMEADLDNPYILITDKKISNIQDILPLLQEIVQQGKSLLIIADDVTGEALPTLVLNKIRGTFNVVAVKAPGFGDRRKAQLEDIAALTGGTVITDDLGFELKDTKIDQLGQARRVTVTKDSTTIVDGAGSKDAIKEREDSIRKQIEESTSDFDKKKLQERLAKLTGGVAVIHVGAATETELKERRYRIEDALNSTRAAVDEGYVAGGGTALVDVEKAIKDLKGETSDEQTGINIVLRALSAPVRQIAENAGKDGAVVLNKLESQENEIGYNAATDKWENMVEAGIIDPTKVTRTALQNAASIAALLLTTEAVVADIPEDKPEAPQAGAAGAPGMGM</sequence>
<protein>
    <recommendedName>
        <fullName evidence="1">Chaperonin GroEL</fullName>
        <ecNumber evidence="1">5.6.1.7</ecNumber>
    </recommendedName>
    <alternativeName>
        <fullName evidence="1">60 kDa chaperonin</fullName>
    </alternativeName>
    <alternativeName>
        <fullName evidence="1">Chaperonin-60</fullName>
        <shortName evidence="1">Cpn60</shortName>
    </alternativeName>
</protein>
<comment type="function">
    <text evidence="1">Together with its co-chaperonin GroES, plays an essential role in assisting protein folding. The GroEL-GroES system forms a nano-cage that allows encapsulation of the non-native substrate proteins and provides a physical environment optimized to promote and accelerate protein folding.</text>
</comment>
<comment type="catalytic activity">
    <reaction evidence="1">
        <text>ATP + H2O + a folded polypeptide = ADP + phosphate + an unfolded polypeptide.</text>
        <dbReference type="EC" id="5.6.1.7"/>
    </reaction>
</comment>
<comment type="subunit">
    <text evidence="1">Forms a cylinder of 14 subunits composed of two heptameric rings stacked back-to-back. Interacts with the co-chaperonin GroES.</text>
</comment>
<comment type="subcellular location">
    <subcellularLocation>
        <location evidence="1">Cytoplasm</location>
    </subcellularLocation>
</comment>
<comment type="similarity">
    <text evidence="1">Belongs to the chaperonin (HSP60) family.</text>
</comment>
<feature type="chain" id="PRO_0000063397" description="Chaperonin GroEL">
    <location>
        <begin position="1"/>
        <end position="542"/>
    </location>
</feature>
<feature type="binding site" evidence="1">
    <location>
        <begin position="29"/>
        <end position="32"/>
    </location>
    <ligand>
        <name>ATP</name>
        <dbReference type="ChEBI" id="CHEBI:30616"/>
    </ligand>
</feature>
<feature type="binding site" evidence="1">
    <location>
        <begin position="86"/>
        <end position="90"/>
    </location>
    <ligand>
        <name>ATP</name>
        <dbReference type="ChEBI" id="CHEBI:30616"/>
    </ligand>
</feature>
<feature type="binding site" evidence="1">
    <location>
        <position position="413"/>
    </location>
    <ligand>
        <name>ATP</name>
        <dbReference type="ChEBI" id="CHEBI:30616"/>
    </ligand>
</feature>
<feature type="binding site" evidence="1">
    <location>
        <begin position="477"/>
        <end position="479"/>
    </location>
    <ligand>
        <name>ATP</name>
        <dbReference type="ChEBI" id="CHEBI:30616"/>
    </ligand>
</feature>
<feature type="binding site" evidence="1">
    <location>
        <position position="493"/>
    </location>
    <ligand>
        <name>ATP</name>
        <dbReference type="ChEBI" id="CHEBI:30616"/>
    </ligand>
</feature>
<feature type="sequence conflict" description="In Ref. 1; AAK97218." evidence="2" ref="1">
    <original>D</original>
    <variation>E</variation>
    <location>
        <position position="170"/>
    </location>
</feature>
<feature type="sequence conflict" description="In Ref. 1; AAK97218." evidence="2" ref="1">
    <original>I</original>
    <variation>T</variation>
    <location>
        <position position="175"/>
    </location>
</feature>
<feature type="sequence conflict" description="In Ref. 1; AAK97218." evidence="2" ref="1">
    <original>D</original>
    <variation>E</variation>
    <location>
        <position position="338"/>
    </location>
</feature>
<feature type="sequence conflict" description="In Ref. 1; AAK97218." evidence="2" ref="1">
    <original>K</original>
    <variation>E</variation>
    <location>
        <position position="369"/>
    </location>
</feature>
<feature type="sequence conflict" description="In Ref. 1." evidence="2" ref="1">
    <original>T</original>
    <variation>TGKVT</variation>
    <location>
        <position position="498"/>
    </location>
</feature>
<evidence type="ECO:0000255" key="1">
    <source>
        <dbReference type="HAMAP-Rule" id="MF_00600"/>
    </source>
</evidence>
<evidence type="ECO:0000305" key="2"/>
<reference key="1">
    <citation type="submission" date="2000-08" db="EMBL/GenBank/DDBJ databases">
        <title>Characterization of the Lactobacillus acidophilus CRL 639 groESL operon.</title>
        <authorList>
            <person name="Lorca G.L."/>
            <person name="Font de Valdez G."/>
        </authorList>
    </citation>
    <scope>NUCLEOTIDE SEQUENCE [GENOMIC DNA]</scope>
    <source>
        <strain>CRL 639</strain>
    </source>
</reference>
<reference key="2">
    <citation type="journal article" date="2005" name="Proc. Natl. Acad. Sci. U.S.A.">
        <title>Complete genome sequence of the probiotic lactic acid bacterium Lactobacillus acidophilus NCFM.</title>
        <authorList>
            <person name="Altermann E."/>
            <person name="Russell W.M."/>
            <person name="Azcarate-Peril M.A."/>
            <person name="Barrangou R."/>
            <person name="Buck B.L."/>
            <person name="McAuliffe O."/>
            <person name="Souther N."/>
            <person name="Dobson A."/>
            <person name="Duong T."/>
            <person name="Callanan M."/>
            <person name="Lick S."/>
            <person name="Hamrick A."/>
            <person name="Cano R."/>
            <person name="Klaenhammer T.R."/>
        </authorList>
    </citation>
    <scope>NUCLEOTIDE SEQUENCE [LARGE SCALE GENOMIC DNA]</scope>
    <source>
        <strain>ATCC 700396 / NCK56 / N2 / NCFM</strain>
    </source>
</reference>
<proteinExistence type="inferred from homology"/>
<keyword id="KW-0067">ATP-binding</keyword>
<keyword id="KW-0143">Chaperone</keyword>
<keyword id="KW-0963">Cytoplasm</keyword>
<keyword id="KW-0413">Isomerase</keyword>
<keyword id="KW-0547">Nucleotide-binding</keyword>
<keyword id="KW-1185">Reference proteome</keyword>